<comment type="function">
    <text evidence="1">Allows the formation of correctly charged Asn-tRNA(Asn) or Gln-tRNA(Gln) through the transamidation of misacylated Asp-tRNA(Asn) or Glu-tRNA(Gln) in organisms which lack either or both of asparaginyl-tRNA or glutaminyl-tRNA synthetases. The reaction takes place in the presence of glutamine and ATP through an activated phospho-Asp-tRNA(Asn) or phospho-Glu-tRNA(Gln).</text>
</comment>
<comment type="catalytic activity">
    <reaction evidence="1">
        <text>L-glutamyl-tRNA(Gln) + L-glutamine + ATP + H2O = L-glutaminyl-tRNA(Gln) + L-glutamate + ADP + phosphate + H(+)</text>
        <dbReference type="Rhea" id="RHEA:17521"/>
        <dbReference type="Rhea" id="RHEA-COMP:9681"/>
        <dbReference type="Rhea" id="RHEA-COMP:9684"/>
        <dbReference type="ChEBI" id="CHEBI:15377"/>
        <dbReference type="ChEBI" id="CHEBI:15378"/>
        <dbReference type="ChEBI" id="CHEBI:29985"/>
        <dbReference type="ChEBI" id="CHEBI:30616"/>
        <dbReference type="ChEBI" id="CHEBI:43474"/>
        <dbReference type="ChEBI" id="CHEBI:58359"/>
        <dbReference type="ChEBI" id="CHEBI:78520"/>
        <dbReference type="ChEBI" id="CHEBI:78521"/>
        <dbReference type="ChEBI" id="CHEBI:456216"/>
    </reaction>
</comment>
<comment type="catalytic activity">
    <reaction evidence="1">
        <text>L-aspartyl-tRNA(Asn) + L-glutamine + ATP + H2O = L-asparaginyl-tRNA(Asn) + L-glutamate + ADP + phosphate + 2 H(+)</text>
        <dbReference type="Rhea" id="RHEA:14513"/>
        <dbReference type="Rhea" id="RHEA-COMP:9674"/>
        <dbReference type="Rhea" id="RHEA-COMP:9677"/>
        <dbReference type="ChEBI" id="CHEBI:15377"/>
        <dbReference type="ChEBI" id="CHEBI:15378"/>
        <dbReference type="ChEBI" id="CHEBI:29985"/>
        <dbReference type="ChEBI" id="CHEBI:30616"/>
        <dbReference type="ChEBI" id="CHEBI:43474"/>
        <dbReference type="ChEBI" id="CHEBI:58359"/>
        <dbReference type="ChEBI" id="CHEBI:78515"/>
        <dbReference type="ChEBI" id="CHEBI:78516"/>
        <dbReference type="ChEBI" id="CHEBI:456216"/>
    </reaction>
</comment>
<comment type="subunit">
    <text evidence="1">Heterotrimer of A, B and C subunits.</text>
</comment>
<comment type="similarity">
    <text evidence="1">Belongs to the GatB/GatE family. GatB subfamily.</text>
</comment>
<protein>
    <recommendedName>
        <fullName evidence="1">Aspartyl/glutamyl-tRNA(Asn/Gln) amidotransferase subunit B</fullName>
        <shortName evidence="1">Asp/Glu-ADT subunit B</shortName>
        <ecNumber evidence="1">6.3.5.-</ecNumber>
    </recommendedName>
</protein>
<feature type="chain" id="PRO_1000122502" description="Aspartyl/glutamyl-tRNA(Asn/Gln) amidotransferase subunit B">
    <location>
        <begin position="1"/>
        <end position="485"/>
    </location>
</feature>
<name>GATB_ANAMF</name>
<organism>
    <name type="scientific">Anaplasma marginale (strain Florida)</name>
    <dbReference type="NCBI Taxonomy" id="320483"/>
    <lineage>
        <taxon>Bacteria</taxon>
        <taxon>Pseudomonadati</taxon>
        <taxon>Pseudomonadota</taxon>
        <taxon>Alphaproteobacteria</taxon>
        <taxon>Rickettsiales</taxon>
        <taxon>Anaplasmataceae</taxon>
        <taxon>Anaplasma</taxon>
    </lineage>
</organism>
<sequence>MAANTGIIKGNTHEWEMVIGLEVHAQVISNSKLFSGASTGFCSEPNTQVALFDVAMPGTLPVLNARCVEQAVRTSLALSCEVHKYSVFDRKNYFYPDLASGYQITQFYFPIATDGHITLDECCSKDVRISRIHLEQDAGKSMHVGDKTYLDFNRAGVALMEIVSAPDFRSPEEAAEYIKKLRIILRAIGTCDGDMENGSLRCDANVSVRKVGDSNLGARSEIKNLNSIKHLAQAIRHEACRQVEVLESGGVVSQSTMLFDVDTCTTRSMREKEDACDYRYFPDPDLLPLELTTAFIDNIRASLPELPSEKKRRYMQDIGLSRYDADILSSDKDVSAYFESVVAKHAPDLAVPWITGELFGALNKRGSSIADSPVSAGRLVELLDLVADGTISGKMAKQVFALMFETEKSASDIVREQGLCQITSEETLAPIVDRIISESPDEVAEYRQGKTKLLGYFVGKVMKETNGQANPGLVNTLIKRRLAED</sequence>
<dbReference type="EC" id="6.3.5.-" evidence="1"/>
<dbReference type="EMBL" id="CP001079">
    <property type="protein sequence ID" value="ACM49183.1"/>
    <property type="molecule type" value="Genomic_DNA"/>
</dbReference>
<dbReference type="SMR" id="B9KI71"/>
<dbReference type="STRING" id="320483.AMF_312"/>
<dbReference type="KEGG" id="amf:AMF_312"/>
<dbReference type="eggNOG" id="COG0064">
    <property type="taxonomic scope" value="Bacteria"/>
</dbReference>
<dbReference type="HOGENOM" id="CLU_019240_0_0_5"/>
<dbReference type="Proteomes" id="UP000007307">
    <property type="component" value="Chromosome"/>
</dbReference>
<dbReference type="GO" id="GO:0050566">
    <property type="term" value="F:asparaginyl-tRNA synthase (glutamine-hydrolyzing) activity"/>
    <property type="evidence" value="ECO:0007669"/>
    <property type="project" value="RHEA"/>
</dbReference>
<dbReference type="GO" id="GO:0005524">
    <property type="term" value="F:ATP binding"/>
    <property type="evidence" value="ECO:0007669"/>
    <property type="project" value="UniProtKB-KW"/>
</dbReference>
<dbReference type="GO" id="GO:0050567">
    <property type="term" value="F:glutaminyl-tRNA synthase (glutamine-hydrolyzing) activity"/>
    <property type="evidence" value="ECO:0007669"/>
    <property type="project" value="UniProtKB-UniRule"/>
</dbReference>
<dbReference type="GO" id="GO:0070681">
    <property type="term" value="P:glutaminyl-tRNAGln biosynthesis via transamidation"/>
    <property type="evidence" value="ECO:0007669"/>
    <property type="project" value="TreeGrafter"/>
</dbReference>
<dbReference type="GO" id="GO:0006412">
    <property type="term" value="P:translation"/>
    <property type="evidence" value="ECO:0007669"/>
    <property type="project" value="UniProtKB-UniRule"/>
</dbReference>
<dbReference type="FunFam" id="1.10.10.410:FF:000001">
    <property type="entry name" value="Aspartyl/glutamyl-tRNA(Asn/Gln) amidotransferase subunit B"/>
    <property type="match status" value="1"/>
</dbReference>
<dbReference type="Gene3D" id="1.10.10.410">
    <property type="match status" value="1"/>
</dbReference>
<dbReference type="Gene3D" id="1.10.150.380">
    <property type="entry name" value="GatB domain, N-terminal subdomain"/>
    <property type="match status" value="1"/>
</dbReference>
<dbReference type="HAMAP" id="MF_00121">
    <property type="entry name" value="GatB"/>
    <property type="match status" value="1"/>
</dbReference>
<dbReference type="InterPro" id="IPR017959">
    <property type="entry name" value="Asn/Gln-tRNA_amidoTrfase_suB/E"/>
</dbReference>
<dbReference type="InterPro" id="IPR006075">
    <property type="entry name" value="Asn/Gln-tRNA_Trfase_suB/E_cat"/>
</dbReference>
<dbReference type="InterPro" id="IPR018027">
    <property type="entry name" value="Asn/Gln_amidotransferase"/>
</dbReference>
<dbReference type="InterPro" id="IPR003789">
    <property type="entry name" value="Asn/Gln_tRNA_amidoTrase-B-like"/>
</dbReference>
<dbReference type="InterPro" id="IPR004413">
    <property type="entry name" value="GatB"/>
</dbReference>
<dbReference type="InterPro" id="IPR042114">
    <property type="entry name" value="GatB_C_1"/>
</dbReference>
<dbReference type="InterPro" id="IPR023168">
    <property type="entry name" value="GatB_Yqey_C_2"/>
</dbReference>
<dbReference type="InterPro" id="IPR017958">
    <property type="entry name" value="Gln-tRNA_amidoTrfase_suB_CS"/>
</dbReference>
<dbReference type="InterPro" id="IPR014746">
    <property type="entry name" value="Gln_synth/guanido_kin_cat_dom"/>
</dbReference>
<dbReference type="NCBIfam" id="TIGR00133">
    <property type="entry name" value="gatB"/>
    <property type="match status" value="1"/>
</dbReference>
<dbReference type="NCBIfam" id="NF004012">
    <property type="entry name" value="PRK05477.1-2"/>
    <property type="match status" value="1"/>
</dbReference>
<dbReference type="NCBIfam" id="NF004014">
    <property type="entry name" value="PRK05477.1-4"/>
    <property type="match status" value="1"/>
</dbReference>
<dbReference type="NCBIfam" id="NF004015">
    <property type="entry name" value="PRK05477.1-5"/>
    <property type="match status" value="1"/>
</dbReference>
<dbReference type="PANTHER" id="PTHR11659">
    <property type="entry name" value="GLUTAMYL-TRNA GLN AMIDOTRANSFERASE SUBUNIT B MITOCHONDRIAL AND PROKARYOTIC PET112-RELATED"/>
    <property type="match status" value="1"/>
</dbReference>
<dbReference type="PANTHER" id="PTHR11659:SF0">
    <property type="entry name" value="GLUTAMYL-TRNA(GLN) AMIDOTRANSFERASE SUBUNIT B, MITOCHONDRIAL"/>
    <property type="match status" value="1"/>
</dbReference>
<dbReference type="Pfam" id="PF02934">
    <property type="entry name" value="GatB_N"/>
    <property type="match status" value="1"/>
</dbReference>
<dbReference type="Pfam" id="PF02637">
    <property type="entry name" value="GatB_Yqey"/>
    <property type="match status" value="1"/>
</dbReference>
<dbReference type="SMART" id="SM00845">
    <property type="entry name" value="GatB_Yqey"/>
    <property type="match status" value="1"/>
</dbReference>
<dbReference type="SUPFAM" id="SSF89095">
    <property type="entry name" value="GatB/YqeY motif"/>
    <property type="match status" value="1"/>
</dbReference>
<dbReference type="SUPFAM" id="SSF55931">
    <property type="entry name" value="Glutamine synthetase/guanido kinase"/>
    <property type="match status" value="1"/>
</dbReference>
<dbReference type="PROSITE" id="PS01234">
    <property type="entry name" value="GATB"/>
    <property type="match status" value="1"/>
</dbReference>
<accession>B9KI71</accession>
<evidence type="ECO:0000255" key="1">
    <source>
        <dbReference type="HAMAP-Rule" id="MF_00121"/>
    </source>
</evidence>
<reference key="1">
    <citation type="journal article" date="2009" name="BMC Genomics">
        <title>Conservation in the face of diversity: multistrain analysis of an intracellular bacterium.</title>
        <authorList>
            <person name="Dark M.J."/>
            <person name="Herndon D.R."/>
            <person name="Kappmeyer L.S."/>
            <person name="Gonzales M.P."/>
            <person name="Nordeen E."/>
            <person name="Palmer G.H."/>
            <person name="Knowles D.P. Jr."/>
            <person name="Brayton K.A."/>
        </authorList>
    </citation>
    <scope>NUCLEOTIDE SEQUENCE [LARGE SCALE GENOMIC DNA]</scope>
    <source>
        <strain>Florida</strain>
    </source>
</reference>
<proteinExistence type="inferred from homology"/>
<gene>
    <name evidence="1" type="primary">gatB</name>
    <name type="ordered locus">AMF_312</name>
</gene>
<keyword id="KW-0067">ATP-binding</keyword>
<keyword id="KW-0436">Ligase</keyword>
<keyword id="KW-0547">Nucleotide-binding</keyword>
<keyword id="KW-0648">Protein biosynthesis</keyword>
<keyword id="KW-1185">Reference proteome</keyword>